<dbReference type="EC" id="3.9.1.-" evidence="2"/>
<dbReference type="EMBL" id="CR942552">
    <property type="protein sequence ID" value="CAJ83661.1"/>
    <property type="molecule type" value="mRNA"/>
</dbReference>
<dbReference type="EMBL" id="BC158181">
    <property type="protein sequence ID" value="AAI58182.1"/>
    <property type="molecule type" value="mRNA"/>
</dbReference>
<dbReference type="RefSeq" id="NP_001039146.1">
    <property type="nucleotide sequence ID" value="NM_001045681.1"/>
</dbReference>
<dbReference type="SMR" id="Q28BZ2"/>
<dbReference type="FunCoup" id="Q28BZ2">
    <property type="interactions" value="2195"/>
</dbReference>
<dbReference type="STRING" id="8364.ENSXETP00000010365"/>
<dbReference type="PaxDb" id="8364-ENSXETP00000042472"/>
<dbReference type="GeneID" id="733971"/>
<dbReference type="KEGG" id="xtr:733971"/>
<dbReference type="AGR" id="Xenbase:XB-GENE-1000078"/>
<dbReference type="CTD" id="135114"/>
<dbReference type="Xenbase" id="XB-GENE-1000078">
    <property type="gene designation" value="hint3"/>
</dbReference>
<dbReference type="eggNOG" id="KOG4359">
    <property type="taxonomic scope" value="Eukaryota"/>
</dbReference>
<dbReference type="HOGENOM" id="CLU_056776_4_2_1"/>
<dbReference type="InParanoid" id="Q28BZ2"/>
<dbReference type="OMA" id="EKKCIFC"/>
<dbReference type="OrthoDB" id="1915375at2759"/>
<dbReference type="PhylomeDB" id="Q28BZ2"/>
<dbReference type="TreeFam" id="TF353069"/>
<dbReference type="Proteomes" id="UP000008143">
    <property type="component" value="Chromosome 5"/>
</dbReference>
<dbReference type="Bgee" id="ENSXETG00000040798">
    <property type="expression patterns" value="Expressed in skeletal muscle tissue and 13 other cell types or tissues"/>
</dbReference>
<dbReference type="GO" id="GO:0005737">
    <property type="term" value="C:cytoplasm"/>
    <property type="evidence" value="ECO:0000250"/>
    <property type="project" value="UniProtKB"/>
</dbReference>
<dbReference type="GO" id="GO:0005634">
    <property type="term" value="C:nucleus"/>
    <property type="evidence" value="ECO:0000250"/>
    <property type="project" value="UniProtKB"/>
</dbReference>
<dbReference type="GO" id="GO:0043530">
    <property type="term" value="F:adenosine 5'-monophosphoramidase activity"/>
    <property type="evidence" value="ECO:0000250"/>
    <property type="project" value="UniProtKB"/>
</dbReference>
<dbReference type="GO" id="GO:0000166">
    <property type="term" value="F:nucleotide binding"/>
    <property type="evidence" value="ECO:0007669"/>
    <property type="project" value="UniProtKB-KW"/>
</dbReference>
<dbReference type="Gene3D" id="3.30.428.10">
    <property type="entry name" value="HIT-like"/>
    <property type="match status" value="1"/>
</dbReference>
<dbReference type="InterPro" id="IPR011146">
    <property type="entry name" value="HIT-like"/>
</dbReference>
<dbReference type="InterPro" id="IPR036265">
    <property type="entry name" value="HIT-like_sf"/>
</dbReference>
<dbReference type="PANTHER" id="PTHR12486:SF5">
    <property type="entry name" value="ADENOSINE 5'-MONOPHOSPHORAMIDASE HINT3"/>
    <property type="match status" value="1"/>
</dbReference>
<dbReference type="PANTHER" id="PTHR12486">
    <property type="entry name" value="APRATAXIN-RELATED"/>
    <property type="match status" value="1"/>
</dbReference>
<dbReference type="Pfam" id="PF11969">
    <property type="entry name" value="DcpS_C"/>
    <property type="match status" value="1"/>
</dbReference>
<dbReference type="SUPFAM" id="SSF54197">
    <property type="entry name" value="HIT-like"/>
    <property type="match status" value="1"/>
</dbReference>
<dbReference type="PROSITE" id="PS51084">
    <property type="entry name" value="HIT_2"/>
    <property type="match status" value="1"/>
</dbReference>
<organism>
    <name type="scientific">Xenopus tropicalis</name>
    <name type="common">Western clawed frog</name>
    <name type="synonym">Silurana tropicalis</name>
    <dbReference type="NCBI Taxonomy" id="8364"/>
    <lineage>
        <taxon>Eukaryota</taxon>
        <taxon>Metazoa</taxon>
        <taxon>Chordata</taxon>
        <taxon>Craniata</taxon>
        <taxon>Vertebrata</taxon>
        <taxon>Euteleostomi</taxon>
        <taxon>Amphibia</taxon>
        <taxon>Batrachia</taxon>
        <taxon>Anura</taxon>
        <taxon>Pipoidea</taxon>
        <taxon>Pipidae</taxon>
        <taxon>Xenopodinae</taxon>
        <taxon>Xenopus</taxon>
        <taxon>Silurana</taxon>
    </lineage>
</organism>
<sequence length="153" mass="17316">MSAEAGATVEQNHSYDMSCIFCRIANKQESGAELLHSDDDLVCFKDIRPAVTHHYLVVPKKHVGTCKTLTKDHVQLIKTMMEVGKSTLQKNNVTDLEDIRLGFHYPPFCSISHLHLHVLAPASQLGFLSRMIYRVNSYWFITADELIDQLQAS</sequence>
<comment type="function">
    <text evidence="2">Exhibits adenosine 5'-monophosphoramidase activity, hydrolyzing purine nucleotide phosphoramidates with a single phosphate group such as adenosine 5'monophosphoramidate (AMP-NH2) to yield AMP and NH2 (By similarity). Hydrolyzes lysyl-AMP (AMP-N-epsilon-(N-alpha-acetyl lysine methyl ester)) generated by lysine tRNA ligase (By similarity).</text>
</comment>
<comment type="catalytic activity">
    <reaction evidence="2">
        <text>adenosine 5'-phosphoramidate + H2O = AMP + NH4(+)</text>
        <dbReference type="Rhea" id="RHEA:67916"/>
        <dbReference type="ChEBI" id="CHEBI:15377"/>
        <dbReference type="ChEBI" id="CHEBI:28938"/>
        <dbReference type="ChEBI" id="CHEBI:57890"/>
        <dbReference type="ChEBI" id="CHEBI:456215"/>
    </reaction>
</comment>
<comment type="subunit">
    <text evidence="2">Forms dimers to octamers and even larger oligomer.</text>
</comment>
<comment type="subcellular location">
    <subcellularLocation>
        <location evidence="2">Cytoplasm</location>
    </subcellularLocation>
    <subcellularLocation>
        <location evidence="2">Nucleus</location>
    </subcellularLocation>
</comment>
<comment type="similarity">
    <text evidence="4">Belongs to the HINT family.</text>
</comment>
<keyword id="KW-0963">Cytoplasm</keyword>
<keyword id="KW-0378">Hydrolase</keyword>
<keyword id="KW-0547">Nucleotide-binding</keyword>
<keyword id="KW-0539">Nucleus</keyword>
<keyword id="KW-1185">Reference proteome</keyword>
<evidence type="ECO:0000250" key="1">
    <source>
        <dbReference type="UniProtKB" id="P49773"/>
    </source>
</evidence>
<evidence type="ECO:0000250" key="2">
    <source>
        <dbReference type="UniProtKB" id="Q9NQE9"/>
    </source>
</evidence>
<evidence type="ECO:0000255" key="3">
    <source>
        <dbReference type="PROSITE-ProRule" id="PRU00464"/>
    </source>
</evidence>
<evidence type="ECO:0000305" key="4"/>
<feature type="chain" id="PRO_0000324332" description="Adenosine 5'-monophosphoramidase HINT3">
    <location>
        <begin position="1"/>
        <end position="153"/>
    </location>
</feature>
<feature type="domain" description="HIT" evidence="3">
    <location>
        <begin position="20"/>
        <end position="130"/>
    </location>
</feature>
<feature type="short sequence motif" description="Histidine triad motif">
    <location>
        <begin position="113"/>
        <end position="117"/>
    </location>
</feature>
<feature type="active site" description="Tele-AMP-histidine intermediate" evidence="2">
    <location>
        <position position="115"/>
    </location>
</feature>
<feature type="binding site" evidence="1">
    <location>
        <begin position="46"/>
        <end position="47"/>
    </location>
    <ligand>
        <name>AMP</name>
        <dbReference type="ChEBI" id="CHEBI:456215"/>
    </ligand>
</feature>
<feature type="binding site" evidence="1">
    <location>
        <begin position="115"/>
        <end position="117"/>
    </location>
    <ligand>
        <name>AMP</name>
        <dbReference type="ChEBI" id="CHEBI:456215"/>
    </ligand>
</feature>
<accession>Q28BZ2</accession>
<reference key="1">
    <citation type="submission" date="2006-10" db="EMBL/GenBank/DDBJ databases">
        <authorList>
            <consortium name="Sanger Xenopus tropicalis EST/cDNA project"/>
        </authorList>
    </citation>
    <scope>NUCLEOTIDE SEQUENCE [LARGE SCALE MRNA]</scope>
    <source>
        <tissue>Egg</tissue>
    </source>
</reference>
<reference key="2">
    <citation type="submission" date="2008-01" db="EMBL/GenBank/DDBJ databases">
        <authorList>
            <consortium name="NIH - Xenopus Gene Collection (XGC) project"/>
        </authorList>
    </citation>
    <scope>NUCLEOTIDE SEQUENCE [LARGE SCALE MRNA]</scope>
    <source>
        <tissue>Brain</tissue>
    </source>
</reference>
<name>HINT3_XENTR</name>
<gene>
    <name type="primary">hint3</name>
    <name type="ORF">TEgg107p05.1</name>
</gene>
<protein>
    <recommendedName>
        <fullName evidence="2">Adenosine 5'-monophosphoramidase HINT3</fullName>
        <ecNumber evidence="2">3.9.1.-</ecNumber>
    </recommendedName>
    <alternativeName>
        <fullName>Histidine triad nucleotide-binding protein 3</fullName>
        <shortName>HINT-3</shortName>
    </alternativeName>
</protein>
<proteinExistence type="evidence at transcript level"/>